<name>QUEF_STAAE</name>
<comment type="function">
    <text evidence="1">Catalyzes the NADPH-dependent reduction of 7-cyano-7-deazaguanine (preQ0) to 7-aminomethyl-7-deazaguanine (preQ1).</text>
</comment>
<comment type="catalytic activity">
    <reaction evidence="1">
        <text>7-aminomethyl-7-carbaguanine + 2 NADP(+) = 7-cyano-7-deazaguanine + 2 NADPH + 3 H(+)</text>
        <dbReference type="Rhea" id="RHEA:13409"/>
        <dbReference type="ChEBI" id="CHEBI:15378"/>
        <dbReference type="ChEBI" id="CHEBI:45075"/>
        <dbReference type="ChEBI" id="CHEBI:57783"/>
        <dbReference type="ChEBI" id="CHEBI:58349"/>
        <dbReference type="ChEBI" id="CHEBI:58703"/>
        <dbReference type="EC" id="1.7.1.13"/>
    </reaction>
</comment>
<comment type="pathway">
    <text evidence="1">tRNA modification; tRNA-queuosine biosynthesis.</text>
</comment>
<comment type="subcellular location">
    <subcellularLocation>
        <location evidence="1">Cytoplasm</location>
    </subcellularLocation>
</comment>
<comment type="similarity">
    <text evidence="1">Belongs to the GTP cyclohydrolase I family. QueF type 1 subfamily.</text>
</comment>
<organism>
    <name type="scientific">Staphylococcus aureus (strain Newman)</name>
    <dbReference type="NCBI Taxonomy" id="426430"/>
    <lineage>
        <taxon>Bacteria</taxon>
        <taxon>Bacillati</taxon>
        <taxon>Bacillota</taxon>
        <taxon>Bacilli</taxon>
        <taxon>Bacillales</taxon>
        <taxon>Staphylococcaceae</taxon>
        <taxon>Staphylococcus</taxon>
    </lineage>
</organism>
<accession>A6QF37</accession>
<proteinExistence type="inferred from homology"/>
<sequence>MAHGRQQDELQDITLLGNQDNTYNFDYRPDVLESFDNKHQGRDYFVKFNCPEFTSLCPITGQPDFATIYISYIPNVKMVESKSLKLYLFSFRNHGDFHEDCMNIIMNDLIELMDPHYIEVWGKFTPRGGISIDPYTNYGRPNSKYEKMAEHRLMNHDLYPEKIDNR</sequence>
<protein>
    <recommendedName>
        <fullName evidence="1">NADPH-dependent 7-cyano-7-deazaguanine reductase</fullName>
        <ecNumber evidence="1">1.7.1.13</ecNumber>
    </recommendedName>
    <alternativeName>
        <fullName evidence="1">7-cyano-7-carbaguanine reductase</fullName>
    </alternativeName>
    <alternativeName>
        <fullName evidence="1">NADPH-dependent nitrile oxidoreductase</fullName>
    </alternativeName>
    <alternativeName>
        <fullName evidence="1">PreQ(0) reductase</fullName>
    </alternativeName>
</protein>
<feature type="chain" id="PRO_1000072872" description="NADPH-dependent 7-cyano-7-deazaguanine reductase">
    <location>
        <begin position="1"/>
        <end position="166"/>
    </location>
</feature>
<feature type="active site" description="Thioimide intermediate" evidence="1">
    <location>
        <position position="57"/>
    </location>
</feature>
<feature type="active site" description="Proton donor" evidence="1">
    <location>
        <position position="64"/>
    </location>
</feature>
<feature type="binding site" evidence="1">
    <location>
        <begin position="79"/>
        <end position="81"/>
    </location>
    <ligand>
        <name>substrate</name>
    </ligand>
</feature>
<feature type="binding site" evidence="1">
    <location>
        <begin position="98"/>
        <end position="99"/>
    </location>
    <ligand>
        <name>substrate</name>
    </ligand>
</feature>
<keyword id="KW-0963">Cytoplasm</keyword>
<keyword id="KW-0521">NADP</keyword>
<keyword id="KW-0560">Oxidoreductase</keyword>
<keyword id="KW-0671">Queuosine biosynthesis</keyword>
<reference key="1">
    <citation type="journal article" date="2008" name="J. Bacteriol.">
        <title>Genome sequence of Staphylococcus aureus strain Newman and comparative analysis of staphylococcal genomes: polymorphism and evolution of two major pathogenicity islands.</title>
        <authorList>
            <person name="Baba T."/>
            <person name="Bae T."/>
            <person name="Schneewind O."/>
            <person name="Takeuchi F."/>
            <person name="Hiramatsu K."/>
        </authorList>
    </citation>
    <scope>NUCLEOTIDE SEQUENCE [LARGE SCALE GENOMIC DNA]</scope>
    <source>
        <strain>Newman</strain>
    </source>
</reference>
<dbReference type="EC" id="1.7.1.13" evidence="1"/>
<dbReference type="EMBL" id="AP009351">
    <property type="protein sequence ID" value="BAF66969.1"/>
    <property type="molecule type" value="Genomic_DNA"/>
</dbReference>
<dbReference type="RefSeq" id="WP_000930014.1">
    <property type="nucleotide sequence ID" value="NZ_JBBIAE010000002.1"/>
</dbReference>
<dbReference type="SMR" id="A6QF37"/>
<dbReference type="KEGG" id="sae:NWMN_0697"/>
<dbReference type="HOGENOM" id="CLU_102489_0_1_9"/>
<dbReference type="UniPathway" id="UPA00392"/>
<dbReference type="Proteomes" id="UP000006386">
    <property type="component" value="Chromosome"/>
</dbReference>
<dbReference type="GO" id="GO:0005737">
    <property type="term" value="C:cytoplasm"/>
    <property type="evidence" value="ECO:0007669"/>
    <property type="project" value="UniProtKB-SubCell"/>
</dbReference>
<dbReference type="GO" id="GO:0033739">
    <property type="term" value="F:preQ1 synthase activity"/>
    <property type="evidence" value="ECO:0007669"/>
    <property type="project" value="UniProtKB-UniRule"/>
</dbReference>
<dbReference type="GO" id="GO:0008616">
    <property type="term" value="P:queuosine biosynthetic process"/>
    <property type="evidence" value="ECO:0007669"/>
    <property type="project" value="UniProtKB-UniRule"/>
</dbReference>
<dbReference type="GO" id="GO:0006400">
    <property type="term" value="P:tRNA modification"/>
    <property type="evidence" value="ECO:0007669"/>
    <property type="project" value="UniProtKB-UniRule"/>
</dbReference>
<dbReference type="Gene3D" id="3.30.1130.10">
    <property type="match status" value="1"/>
</dbReference>
<dbReference type="HAMAP" id="MF_00818">
    <property type="entry name" value="QueF_type1"/>
    <property type="match status" value="1"/>
</dbReference>
<dbReference type="InterPro" id="IPR043133">
    <property type="entry name" value="GTP-CH-I_C/QueF"/>
</dbReference>
<dbReference type="InterPro" id="IPR050084">
    <property type="entry name" value="NADPH_dep_7-cyano-7-deazaG_red"/>
</dbReference>
<dbReference type="InterPro" id="IPR029500">
    <property type="entry name" value="QueF"/>
</dbReference>
<dbReference type="InterPro" id="IPR016856">
    <property type="entry name" value="QueF_type1"/>
</dbReference>
<dbReference type="NCBIfam" id="TIGR03139">
    <property type="entry name" value="QueF-II"/>
    <property type="match status" value="1"/>
</dbReference>
<dbReference type="PANTHER" id="PTHR34354">
    <property type="entry name" value="NADPH-DEPENDENT 7-CYANO-7-DEAZAGUANINE REDUCTASE"/>
    <property type="match status" value="1"/>
</dbReference>
<dbReference type="PANTHER" id="PTHR34354:SF1">
    <property type="entry name" value="NADPH-DEPENDENT 7-CYANO-7-DEAZAGUANINE REDUCTASE"/>
    <property type="match status" value="1"/>
</dbReference>
<dbReference type="Pfam" id="PF14489">
    <property type="entry name" value="QueF"/>
    <property type="match status" value="1"/>
</dbReference>
<dbReference type="PIRSF" id="PIRSF027377">
    <property type="entry name" value="Nitrile_oxidored_QueF"/>
    <property type="match status" value="1"/>
</dbReference>
<dbReference type="SUPFAM" id="SSF55620">
    <property type="entry name" value="Tetrahydrobiopterin biosynthesis enzymes-like"/>
    <property type="match status" value="1"/>
</dbReference>
<evidence type="ECO:0000255" key="1">
    <source>
        <dbReference type="HAMAP-Rule" id="MF_00818"/>
    </source>
</evidence>
<gene>
    <name evidence="1" type="primary">queF</name>
    <name type="ordered locus">NWMN_0697</name>
</gene>